<reference key="1">
    <citation type="journal article" date="2005" name="Science">
        <title>The transcriptional landscape of the mammalian genome.</title>
        <authorList>
            <person name="Carninci P."/>
            <person name="Kasukawa T."/>
            <person name="Katayama S."/>
            <person name="Gough J."/>
            <person name="Frith M.C."/>
            <person name="Maeda N."/>
            <person name="Oyama R."/>
            <person name="Ravasi T."/>
            <person name="Lenhard B."/>
            <person name="Wells C."/>
            <person name="Kodzius R."/>
            <person name="Shimokawa K."/>
            <person name="Bajic V.B."/>
            <person name="Brenner S.E."/>
            <person name="Batalov S."/>
            <person name="Forrest A.R."/>
            <person name="Zavolan M."/>
            <person name="Davis M.J."/>
            <person name="Wilming L.G."/>
            <person name="Aidinis V."/>
            <person name="Allen J.E."/>
            <person name="Ambesi-Impiombato A."/>
            <person name="Apweiler R."/>
            <person name="Aturaliya R.N."/>
            <person name="Bailey T.L."/>
            <person name="Bansal M."/>
            <person name="Baxter L."/>
            <person name="Beisel K.W."/>
            <person name="Bersano T."/>
            <person name="Bono H."/>
            <person name="Chalk A.M."/>
            <person name="Chiu K.P."/>
            <person name="Choudhary V."/>
            <person name="Christoffels A."/>
            <person name="Clutterbuck D.R."/>
            <person name="Crowe M.L."/>
            <person name="Dalla E."/>
            <person name="Dalrymple B.P."/>
            <person name="de Bono B."/>
            <person name="Della Gatta G."/>
            <person name="di Bernardo D."/>
            <person name="Down T."/>
            <person name="Engstrom P."/>
            <person name="Fagiolini M."/>
            <person name="Faulkner G."/>
            <person name="Fletcher C.F."/>
            <person name="Fukushima T."/>
            <person name="Furuno M."/>
            <person name="Futaki S."/>
            <person name="Gariboldi M."/>
            <person name="Georgii-Hemming P."/>
            <person name="Gingeras T.R."/>
            <person name="Gojobori T."/>
            <person name="Green R.E."/>
            <person name="Gustincich S."/>
            <person name="Harbers M."/>
            <person name="Hayashi Y."/>
            <person name="Hensch T.K."/>
            <person name="Hirokawa N."/>
            <person name="Hill D."/>
            <person name="Huminiecki L."/>
            <person name="Iacono M."/>
            <person name="Ikeo K."/>
            <person name="Iwama A."/>
            <person name="Ishikawa T."/>
            <person name="Jakt M."/>
            <person name="Kanapin A."/>
            <person name="Katoh M."/>
            <person name="Kawasawa Y."/>
            <person name="Kelso J."/>
            <person name="Kitamura H."/>
            <person name="Kitano H."/>
            <person name="Kollias G."/>
            <person name="Krishnan S.P."/>
            <person name="Kruger A."/>
            <person name="Kummerfeld S.K."/>
            <person name="Kurochkin I.V."/>
            <person name="Lareau L.F."/>
            <person name="Lazarevic D."/>
            <person name="Lipovich L."/>
            <person name="Liu J."/>
            <person name="Liuni S."/>
            <person name="McWilliam S."/>
            <person name="Madan Babu M."/>
            <person name="Madera M."/>
            <person name="Marchionni L."/>
            <person name="Matsuda H."/>
            <person name="Matsuzawa S."/>
            <person name="Miki H."/>
            <person name="Mignone F."/>
            <person name="Miyake S."/>
            <person name="Morris K."/>
            <person name="Mottagui-Tabar S."/>
            <person name="Mulder N."/>
            <person name="Nakano N."/>
            <person name="Nakauchi H."/>
            <person name="Ng P."/>
            <person name="Nilsson R."/>
            <person name="Nishiguchi S."/>
            <person name="Nishikawa S."/>
            <person name="Nori F."/>
            <person name="Ohara O."/>
            <person name="Okazaki Y."/>
            <person name="Orlando V."/>
            <person name="Pang K.C."/>
            <person name="Pavan W.J."/>
            <person name="Pavesi G."/>
            <person name="Pesole G."/>
            <person name="Petrovsky N."/>
            <person name="Piazza S."/>
            <person name="Reed J."/>
            <person name="Reid J.F."/>
            <person name="Ring B.Z."/>
            <person name="Ringwald M."/>
            <person name="Rost B."/>
            <person name="Ruan Y."/>
            <person name="Salzberg S.L."/>
            <person name="Sandelin A."/>
            <person name="Schneider C."/>
            <person name="Schoenbach C."/>
            <person name="Sekiguchi K."/>
            <person name="Semple C.A."/>
            <person name="Seno S."/>
            <person name="Sessa L."/>
            <person name="Sheng Y."/>
            <person name="Shibata Y."/>
            <person name="Shimada H."/>
            <person name="Shimada K."/>
            <person name="Silva D."/>
            <person name="Sinclair B."/>
            <person name="Sperling S."/>
            <person name="Stupka E."/>
            <person name="Sugiura K."/>
            <person name="Sultana R."/>
            <person name="Takenaka Y."/>
            <person name="Taki K."/>
            <person name="Tammoja K."/>
            <person name="Tan S.L."/>
            <person name="Tang S."/>
            <person name="Taylor M.S."/>
            <person name="Tegner J."/>
            <person name="Teichmann S.A."/>
            <person name="Ueda H.R."/>
            <person name="van Nimwegen E."/>
            <person name="Verardo R."/>
            <person name="Wei C.L."/>
            <person name="Yagi K."/>
            <person name="Yamanishi H."/>
            <person name="Zabarovsky E."/>
            <person name="Zhu S."/>
            <person name="Zimmer A."/>
            <person name="Hide W."/>
            <person name="Bult C."/>
            <person name="Grimmond S.M."/>
            <person name="Teasdale R.D."/>
            <person name="Liu E.T."/>
            <person name="Brusic V."/>
            <person name="Quackenbush J."/>
            <person name="Wahlestedt C."/>
            <person name="Mattick J.S."/>
            <person name="Hume D.A."/>
            <person name="Kai C."/>
            <person name="Sasaki D."/>
            <person name="Tomaru Y."/>
            <person name="Fukuda S."/>
            <person name="Kanamori-Katayama M."/>
            <person name="Suzuki M."/>
            <person name="Aoki J."/>
            <person name="Arakawa T."/>
            <person name="Iida J."/>
            <person name="Imamura K."/>
            <person name="Itoh M."/>
            <person name="Kato T."/>
            <person name="Kawaji H."/>
            <person name="Kawagashira N."/>
            <person name="Kawashima T."/>
            <person name="Kojima M."/>
            <person name="Kondo S."/>
            <person name="Konno H."/>
            <person name="Nakano K."/>
            <person name="Ninomiya N."/>
            <person name="Nishio T."/>
            <person name="Okada M."/>
            <person name="Plessy C."/>
            <person name="Shibata K."/>
            <person name="Shiraki T."/>
            <person name="Suzuki S."/>
            <person name="Tagami M."/>
            <person name="Waki K."/>
            <person name="Watahiki A."/>
            <person name="Okamura-Oho Y."/>
            <person name="Suzuki H."/>
            <person name="Kawai J."/>
            <person name="Hayashizaki Y."/>
        </authorList>
    </citation>
    <scope>NUCLEOTIDE SEQUENCE [LARGE SCALE MRNA]</scope>
    <source>
        <strain>C57BL/6J</strain>
        <strain>DBA/2J</strain>
        <tissue>Embryo</tissue>
        <tissue>Lung</tissue>
    </source>
</reference>
<reference key="2">
    <citation type="journal article" date="2009" name="PLoS Biol.">
        <title>Lineage-specific biology revealed by a finished genome assembly of the mouse.</title>
        <authorList>
            <person name="Church D.M."/>
            <person name="Goodstadt L."/>
            <person name="Hillier L.W."/>
            <person name="Zody M.C."/>
            <person name="Goldstein S."/>
            <person name="She X."/>
            <person name="Bult C.J."/>
            <person name="Agarwala R."/>
            <person name="Cherry J.L."/>
            <person name="DiCuccio M."/>
            <person name="Hlavina W."/>
            <person name="Kapustin Y."/>
            <person name="Meric P."/>
            <person name="Maglott D."/>
            <person name="Birtle Z."/>
            <person name="Marques A.C."/>
            <person name="Graves T."/>
            <person name="Zhou S."/>
            <person name="Teague B."/>
            <person name="Potamousis K."/>
            <person name="Churas C."/>
            <person name="Place M."/>
            <person name="Herschleb J."/>
            <person name="Runnheim R."/>
            <person name="Forrest D."/>
            <person name="Amos-Landgraf J."/>
            <person name="Schwartz D.C."/>
            <person name="Cheng Z."/>
            <person name="Lindblad-Toh K."/>
            <person name="Eichler E.E."/>
            <person name="Ponting C.P."/>
        </authorList>
    </citation>
    <scope>NUCLEOTIDE SEQUENCE [LARGE SCALE GENOMIC DNA]</scope>
    <source>
        <strain>C57BL/6J</strain>
    </source>
</reference>
<reference key="3">
    <citation type="submission" date="2005-07" db="EMBL/GenBank/DDBJ databases">
        <authorList>
            <person name="Mural R.J."/>
            <person name="Adams M.D."/>
            <person name="Myers E.W."/>
            <person name="Smith H.O."/>
            <person name="Venter J.C."/>
        </authorList>
    </citation>
    <scope>NUCLEOTIDE SEQUENCE [LARGE SCALE GENOMIC DNA]</scope>
</reference>
<reference key="4">
    <citation type="journal article" date="2004" name="Genome Res.">
        <title>The status, quality, and expansion of the NIH full-length cDNA project: the Mammalian Gene Collection (MGC).</title>
        <authorList>
            <consortium name="The MGC Project Team"/>
        </authorList>
    </citation>
    <scope>NUCLEOTIDE SEQUENCE [LARGE SCALE MRNA]</scope>
    <source>
        <strain>FVB/N</strain>
        <tissue>Mammary tumor</tissue>
    </source>
</reference>
<reference key="5">
    <citation type="journal article" date="2000" name="Proc. Natl. Acad. Sci. U.S.A.">
        <title>A mammalian germ cell-specific RNA-binding protein interacts with ubiquitously expressed proteins involved in splice site selection.</title>
        <authorList>
            <person name="Elliott D.J."/>
            <person name="Bourgeois C.F."/>
            <person name="Klink A."/>
            <person name="Stevenin J."/>
            <person name="Cooke H.J."/>
        </authorList>
    </citation>
    <scope>INTERACTION WITH RBMY</scope>
</reference>
<reference key="6">
    <citation type="journal article" date="2003" name="Biochemistry">
        <title>SRp55 is a regulator of calcitonin/CGRP alternative RNA splicing.</title>
        <authorList>
            <person name="Tran Q."/>
            <person name="Roesser J.R."/>
        </authorList>
    </citation>
    <scope>SUBCELLULAR LOCATION</scope>
</reference>
<reference key="7">
    <citation type="journal article" date="2007" name="Proc. Natl. Acad. Sci. U.S.A.">
        <title>Large-scale phosphorylation analysis of mouse liver.</title>
        <authorList>
            <person name="Villen J."/>
            <person name="Beausoleil S.A."/>
            <person name="Gerber S.A."/>
            <person name="Gygi S.P."/>
        </authorList>
    </citation>
    <scope>IDENTIFICATION BY MASS SPECTROMETRY [LARGE SCALE ANALYSIS]</scope>
    <source>
        <tissue>Liver</tissue>
    </source>
</reference>
<reference key="8">
    <citation type="journal article" date="2010" name="Cell">
        <title>A tissue-specific atlas of mouse protein phosphorylation and expression.</title>
        <authorList>
            <person name="Huttlin E.L."/>
            <person name="Jedrychowski M.P."/>
            <person name="Elias J.E."/>
            <person name="Goswami T."/>
            <person name="Rad R."/>
            <person name="Beausoleil S.A."/>
            <person name="Villen J."/>
            <person name="Haas W."/>
            <person name="Sowa M.E."/>
            <person name="Gygi S.P."/>
        </authorList>
    </citation>
    <scope>PHOSPHORYLATION [LARGE SCALE ANALYSIS] AT SER-45 AND SER-314</scope>
    <scope>IDENTIFICATION BY MASS SPECTROMETRY [LARGE SCALE ANALYSIS]</scope>
    <source>
        <tissue>Brain</tissue>
        <tissue>Heart</tissue>
        <tissue>Kidney</tissue>
        <tissue>Lung</tissue>
        <tissue>Pancreas</tissue>
        <tissue>Spleen</tissue>
        <tissue>Testis</tissue>
    </source>
</reference>
<reference key="9">
    <citation type="journal article" date="2013" name="Mol. Cell">
        <title>SIRT5-mediated lysine desuccinylation impacts diverse metabolic pathways.</title>
        <authorList>
            <person name="Park J."/>
            <person name="Chen Y."/>
            <person name="Tishkoff D.X."/>
            <person name="Peng C."/>
            <person name="Tan M."/>
            <person name="Dai L."/>
            <person name="Xie Z."/>
            <person name="Zhang Y."/>
            <person name="Zwaans B.M."/>
            <person name="Skinner M.E."/>
            <person name="Lombard D.B."/>
            <person name="Zhao Y."/>
        </authorList>
    </citation>
    <scope>ACETYLATION [LARGE SCALE ANALYSIS] AT LYS-165</scope>
    <scope>IDENTIFICATION BY MASS SPECTROMETRY [LARGE SCALE ANALYSIS]</scope>
    <source>
        <tissue>Embryonic fibroblast</tissue>
    </source>
</reference>
<protein>
    <recommendedName>
        <fullName>Serine/arginine-rich splicing factor 6</fullName>
    </recommendedName>
    <alternativeName>
        <fullName>Pre-mRNA-splicing factor SRP55</fullName>
    </alternativeName>
    <alternativeName>
        <fullName>Splicing factor, arginine/serine-rich 6</fullName>
    </alternativeName>
</protein>
<comment type="function">
    <text evidence="1">Plays a role in constitutive splicing and modulates the selection of alternative splice sites. Plays a role in the alternative splicing of MAPT/Tau exon 10. Binds to alternative exons of TNC pre-mRNA and promotes the expression of alternatively spliced TNC. Plays a role in wound healing and in the regulation of keratinocyte differentiation and proliferation via its role in alternative splicing (By similarity).</text>
</comment>
<comment type="subunit">
    <text evidence="1 5">Binds SREK1/SFRS12. Interacts with DYRK1A (By similarity). Interacts with RBMY; the interaction inhibits SRSF6 pre-mRNA splicing (PubMed:10823932).</text>
</comment>
<comment type="subcellular location">
    <subcellularLocation>
        <location evidence="6">Nucleus</location>
    </subcellularLocation>
    <subcellularLocation>
        <location evidence="2">Nucleus speckle</location>
    </subcellularLocation>
</comment>
<comment type="PTM">
    <text evidence="1">Extensively phosphorylated on serine residues in the RS domain. Phosphorylated by DYRK1A, probably in the RS domain. Phosphorylation by DYRK1A modulates alternative splice site selection and inhibits the expression of MAPT/Tau exon 10 (By similarity).</text>
</comment>
<comment type="similarity">
    <text evidence="7">Belongs to the splicing factor SR family.</text>
</comment>
<sequence>MPRVYIGRLSYNVREKDIQRFFSGYGRLLEIDLKNGYGFVEFEDSRDADDAVYELNSKELCGERVIVEHARGPRRDRDGYSYGSRSGGGGYSSRRTSGRDKYGPPVRTEYRLIVENLSSRCSWQDLKDFMRQAGEVTYADAHKERTNEGVIEFRSYSDMKRALDKLDGTEINGRNIRLIEDKPRTSHRRSYSGSRSRSRSRRRSRSRSRRSSRSRSRSISKSRSRSRSRSKGRSRSRSKGRKSRSKSKSKPKSDRGSHSHSRSRSKDKYGKSRSRSRSRSPKENGKGDIKSKSRSRSQSRSHSPLPAPPSKARSMSPPPKRASRSRSRSRSRSRSSSRD</sequence>
<evidence type="ECO:0000250" key="1"/>
<evidence type="ECO:0000250" key="2">
    <source>
        <dbReference type="UniProtKB" id="Q13247"/>
    </source>
</evidence>
<evidence type="ECO:0000255" key="3">
    <source>
        <dbReference type="PROSITE-ProRule" id="PRU00176"/>
    </source>
</evidence>
<evidence type="ECO:0000256" key="4">
    <source>
        <dbReference type="SAM" id="MobiDB-lite"/>
    </source>
</evidence>
<evidence type="ECO:0000269" key="5">
    <source>
    </source>
</evidence>
<evidence type="ECO:0000269" key="6">
    <source>
    </source>
</evidence>
<evidence type="ECO:0000305" key="7"/>
<evidence type="ECO:0007744" key="8">
    <source>
    </source>
</evidence>
<evidence type="ECO:0007744" key="9">
    <source>
    </source>
</evidence>
<dbReference type="EMBL" id="AK004831">
    <property type="protein sequence ID" value="BAB23599.1"/>
    <property type="molecule type" value="mRNA"/>
</dbReference>
<dbReference type="EMBL" id="AK133872">
    <property type="protein sequence ID" value="BAE21902.1"/>
    <property type="molecule type" value="mRNA"/>
</dbReference>
<dbReference type="EMBL" id="AK146293">
    <property type="protein sequence ID" value="BAE27050.1"/>
    <property type="molecule type" value="mRNA"/>
</dbReference>
<dbReference type="EMBL" id="AK159519">
    <property type="protein sequence ID" value="BAE35148.1"/>
    <property type="molecule type" value="mRNA"/>
</dbReference>
<dbReference type="EMBL" id="AL590418">
    <property type="status" value="NOT_ANNOTATED_CDS"/>
    <property type="molecule type" value="Genomic_DNA"/>
</dbReference>
<dbReference type="EMBL" id="AL606473">
    <property type="status" value="NOT_ANNOTATED_CDS"/>
    <property type="molecule type" value="Genomic_DNA"/>
</dbReference>
<dbReference type="EMBL" id="CH466551">
    <property type="protein sequence ID" value="EDL06308.1"/>
    <property type="molecule type" value="Genomic_DNA"/>
</dbReference>
<dbReference type="EMBL" id="BC012039">
    <property type="protein sequence ID" value="AAH12039.1"/>
    <property type="molecule type" value="mRNA"/>
</dbReference>
<dbReference type="CCDS" id="CCDS17002.1"/>
<dbReference type="RefSeq" id="NP_080775.3">
    <property type="nucleotide sequence ID" value="NM_026499.4"/>
</dbReference>
<dbReference type="SMR" id="Q3TWW8"/>
<dbReference type="BioGRID" id="212588">
    <property type="interactions" value="11"/>
</dbReference>
<dbReference type="FunCoup" id="Q3TWW8">
    <property type="interactions" value="4027"/>
</dbReference>
<dbReference type="IntAct" id="Q3TWW8">
    <property type="interactions" value="3"/>
</dbReference>
<dbReference type="STRING" id="10090.ENSMUSP00000119065"/>
<dbReference type="GlyGen" id="Q3TWW8">
    <property type="glycosylation" value="1 site, 1 O-linked glycan (1 site)"/>
</dbReference>
<dbReference type="iPTMnet" id="Q3TWW8"/>
<dbReference type="PhosphoSitePlus" id="Q3TWW8"/>
<dbReference type="SwissPalm" id="Q3TWW8"/>
<dbReference type="jPOST" id="Q3TWW8"/>
<dbReference type="PaxDb" id="10090-ENSMUSP00000119065"/>
<dbReference type="PeptideAtlas" id="Q3TWW8"/>
<dbReference type="ProteomicsDB" id="257073"/>
<dbReference type="Pumba" id="Q3TWW8"/>
<dbReference type="Antibodypedia" id="27122">
    <property type="antibodies" value="119 antibodies from 29 providers"/>
</dbReference>
<dbReference type="DNASU" id="67996"/>
<dbReference type="Ensembl" id="ENSMUST00000130411.7">
    <property type="protein sequence ID" value="ENSMUSP00000119065.2"/>
    <property type="gene ID" value="ENSMUSG00000016921.15"/>
</dbReference>
<dbReference type="GeneID" id="67996"/>
<dbReference type="KEGG" id="mmu:67996"/>
<dbReference type="UCSC" id="uc008nsc.2">
    <property type="organism name" value="mouse"/>
</dbReference>
<dbReference type="AGR" id="MGI:1915246"/>
<dbReference type="CTD" id="6431"/>
<dbReference type="MGI" id="MGI:1915246">
    <property type="gene designation" value="Srsf6"/>
</dbReference>
<dbReference type="VEuPathDB" id="HostDB:ENSMUSG00000016921"/>
<dbReference type="eggNOG" id="KOG0106">
    <property type="taxonomic scope" value="Eukaryota"/>
</dbReference>
<dbReference type="GeneTree" id="ENSGT00940000155448"/>
<dbReference type="HOGENOM" id="CLU_012062_34_2_1"/>
<dbReference type="InParanoid" id="Q3TWW8"/>
<dbReference type="OMA" id="HQPAKAH"/>
<dbReference type="OrthoDB" id="1099063at2759"/>
<dbReference type="PhylomeDB" id="Q3TWW8"/>
<dbReference type="TreeFam" id="TF351335"/>
<dbReference type="BioGRID-ORCS" id="67996">
    <property type="hits" value="9 hits in 81 CRISPR screens"/>
</dbReference>
<dbReference type="ChiTaRS" id="Srsf6">
    <property type="organism name" value="mouse"/>
</dbReference>
<dbReference type="PRO" id="PR:Q3TWW8"/>
<dbReference type="Proteomes" id="UP000000589">
    <property type="component" value="Chromosome 2"/>
</dbReference>
<dbReference type="RNAct" id="Q3TWW8">
    <property type="molecule type" value="protein"/>
</dbReference>
<dbReference type="Bgee" id="ENSMUSG00000016921">
    <property type="expression patterns" value="Expressed in metanephric loop of Henle and 269 other cell types or tissues"/>
</dbReference>
<dbReference type="ExpressionAtlas" id="Q3TWW8">
    <property type="expression patterns" value="baseline and differential"/>
</dbReference>
<dbReference type="GO" id="GO:0016607">
    <property type="term" value="C:nuclear speck"/>
    <property type="evidence" value="ECO:0000250"/>
    <property type="project" value="UniProtKB"/>
</dbReference>
<dbReference type="GO" id="GO:0036002">
    <property type="term" value="F:pre-mRNA binding"/>
    <property type="evidence" value="ECO:0000250"/>
    <property type="project" value="UniProtKB"/>
</dbReference>
<dbReference type="GO" id="GO:0003723">
    <property type="term" value="F:RNA binding"/>
    <property type="evidence" value="ECO:0000250"/>
    <property type="project" value="UniProtKB"/>
</dbReference>
<dbReference type="GO" id="GO:0000380">
    <property type="term" value="P:alternative mRNA splicing, via spliceosome"/>
    <property type="evidence" value="ECO:0000250"/>
    <property type="project" value="UniProtKB"/>
</dbReference>
<dbReference type="GO" id="GO:0006376">
    <property type="term" value="P:mRNA splice site recognition"/>
    <property type="evidence" value="ECO:0000250"/>
    <property type="project" value="UniProtKB"/>
</dbReference>
<dbReference type="GO" id="GO:0045617">
    <property type="term" value="P:negative regulation of keratinocyte differentiation"/>
    <property type="evidence" value="ECO:0000250"/>
    <property type="project" value="UniProtKB"/>
</dbReference>
<dbReference type="GO" id="GO:0048025">
    <property type="term" value="P:negative regulation of mRNA splicing, via spliceosome"/>
    <property type="evidence" value="ECO:0007669"/>
    <property type="project" value="Ensembl"/>
</dbReference>
<dbReference type="GO" id="GO:2000675">
    <property type="term" value="P:negative regulation of type B pancreatic cell apoptotic process"/>
    <property type="evidence" value="ECO:0007669"/>
    <property type="project" value="Ensembl"/>
</dbReference>
<dbReference type="GO" id="GO:0060501">
    <property type="term" value="P:positive regulation of epithelial cell proliferation involved in lung morphogenesis"/>
    <property type="evidence" value="ECO:0000266"/>
    <property type="project" value="MGI"/>
</dbReference>
<dbReference type="GO" id="GO:0000381">
    <property type="term" value="P:regulation of alternative mRNA splicing, via spliceosome"/>
    <property type="evidence" value="ECO:0000250"/>
    <property type="project" value="UniProtKB"/>
</dbReference>
<dbReference type="GO" id="GO:0010837">
    <property type="term" value="P:regulation of keratinocyte proliferation"/>
    <property type="evidence" value="ECO:0000250"/>
    <property type="project" value="UniProtKB"/>
</dbReference>
<dbReference type="GO" id="GO:0061041">
    <property type="term" value="P:regulation of wound healing"/>
    <property type="evidence" value="ECO:0000250"/>
    <property type="project" value="UniProtKB"/>
</dbReference>
<dbReference type="GO" id="GO:0032868">
    <property type="term" value="P:response to insulin"/>
    <property type="evidence" value="ECO:0007669"/>
    <property type="project" value="Ensembl"/>
</dbReference>
<dbReference type="CDD" id="cd12600">
    <property type="entry name" value="RRM2_SRSF4_like"/>
    <property type="match status" value="1"/>
</dbReference>
<dbReference type="FunFam" id="3.30.70.330:FF:000028">
    <property type="entry name" value="Putative serine/arginine-rich splicing factor 4"/>
    <property type="match status" value="1"/>
</dbReference>
<dbReference type="FunFam" id="3.30.70.330:FF:000190">
    <property type="entry name" value="serine/arginine-rich splicing factor 4 isoform X1"/>
    <property type="match status" value="1"/>
</dbReference>
<dbReference type="Gene3D" id="3.30.70.330">
    <property type="match status" value="2"/>
</dbReference>
<dbReference type="InterPro" id="IPR012677">
    <property type="entry name" value="Nucleotide-bd_a/b_plait_sf"/>
</dbReference>
<dbReference type="InterPro" id="IPR035979">
    <property type="entry name" value="RBD_domain_sf"/>
</dbReference>
<dbReference type="InterPro" id="IPR047190">
    <property type="entry name" value="RRM2_SRSF4/6"/>
</dbReference>
<dbReference type="InterPro" id="IPR000504">
    <property type="entry name" value="RRM_dom"/>
</dbReference>
<dbReference type="InterPro" id="IPR050374">
    <property type="entry name" value="RRT5_SRSF_SR"/>
</dbReference>
<dbReference type="PANTHER" id="PTHR23003">
    <property type="entry name" value="RNA RECOGNITION MOTIF RRM DOMAIN CONTAINING PROTEIN"/>
    <property type="match status" value="1"/>
</dbReference>
<dbReference type="PANTHER" id="PTHR23003:SF52">
    <property type="entry name" value="SERINE_ARGININE-RICH SPLICING FACTOR 6"/>
    <property type="match status" value="1"/>
</dbReference>
<dbReference type="Pfam" id="PF00076">
    <property type="entry name" value="RRM_1"/>
    <property type="match status" value="2"/>
</dbReference>
<dbReference type="SMART" id="SM00360">
    <property type="entry name" value="RRM"/>
    <property type="match status" value="2"/>
</dbReference>
<dbReference type="SUPFAM" id="SSF54928">
    <property type="entry name" value="RNA-binding domain, RBD"/>
    <property type="match status" value="2"/>
</dbReference>
<dbReference type="PROSITE" id="PS50102">
    <property type="entry name" value="RRM"/>
    <property type="match status" value="2"/>
</dbReference>
<keyword id="KW-0007">Acetylation</keyword>
<keyword id="KW-1017">Isopeptide bond</keyword>
<keyword id="KW-0507">mRNA processing</keyword>
<keyword id="KW-0508">mRNA splicing</keyword>
<keyword id="KW-0539">Nucleus</keyword>
<keyword id="KW-0597">Phosphoprotein</keyword>
<keyword id="KW-1185">Reference proteome</keyword>
<keyword id="KW-0677">Repeat</keyword>
<keyword id="KW-0678">Repressor</keyword>
<keyword id="KW-0694">RNA-binding</keyword>
<keyword id="KW-0832">Ubl conjugation</keyword>
<feature type="chain" id="PRO_0000426095" description="Serine/arginine-rich splicing factor 6">
    <location>
        <begin position="1"/>
        <end position="339"/>
    </location>
</feature>
<feature type="domain" description="RRM 1" evidence="3">
    <location>
        <begin position="2"/>
        <end position="72"/>
    </location>
</feature>
<feature type="domain" description="RRM 2" evidence="3">
    <location>
        <begin position="110"/>
        <end position="183"/>
    </location>
</feature>
<feature type="region of interest" description="Disordered" evidence="4">
    <location>
        <begin position="75"/>
        <end position="103"/>
    </location>
</feature>
<feature type="region of interest" description="Disordered" evidence="4">
    <location>
        <begin position="176"/>
        <end position="339"/>
    </location>
</feature>
<feature type="compositionally biased region" description="Basic residues" evidence="4">
    <location>
        <begin position="185"/>
        <end position="250"/>
    </location>
</feature>
<feature type="compositionally biased region" description="Basic and acidic residues" evidence="4">
    <location>
        <begin position="280"/>
        <end position="291"/>
    </location>
</feature>
<feature type="compositionally biased region" description="Basic residues" evidence="4">
    <location>
        <begin position="321"/>
        <end position="339"/>
    </location>
</feature>
<feature type="modified residue" description="Phosphoserine" evidence="8">
    <location>
        <position position="45"/>
    </location>
</feature>
<feature type="modified residue" description="Phosphoserine" evidence="2">
    <location>
        <position position="81"/>
    </location>
</feature>
<feature type="modified residue" description="Phosphoserine" evidence="2">
    <location>
        <position position="84"/>
    </location>
</feature>
<feature type="modified residue" description="N6-acetyllysine" evidence="9">
    <location>
        <position position="165"/>
    </location>
</feature>
<feature type="modified residue" description="Phosphoserine" evidence="2">
    <location>
        <position position="297"/>
    </location>
</feature>
<feature type="modified residue" description="Phosphoserine" evidence="2">
    <location>
        <position position="299"/>
    </location>
</feature>
<feature type="modified residue" description="Phosphoserine; by DYRK1A" evidence="2">
    <location>
        <position position="303"/>
    </location>
</feature>
<feature type="modified residue" description="Phosphoserine" evidence="8">
    <location>
        <position position="314"/>
    </location>
</feature>
<feature type="modified residue" description="Phosphoserine" evidence="2">
    <location>
        <position position="316"/>
    </location>
</feature>
<feature type="cross-link" description="Glycyl lysine isopeptide (Lys-Gly) (interchain with G-Cter in SUMO2)" evidence="2">
    <location>
        <position position="182"/>
    </location>
</feature>
<feature type="sequence conflict" description="In Ref. 1; BAB23599." evidence="7" ref="1">
    <original>R</original>
    <variation>K</variation>
    <location>
        <position position="201"/>
    </location>
</feature>
<feature type="sequence conflict" description="In Ref. 1; BAE27050." evidence="7" ref="1">
    <original>S</original>
    <variation>G</variation>
    <location>
        <position position="230"/>
    </location>
</feature>
<feature type="sequence conflict" description="In Ref. 1; BAE27050." evidence="7" ref="1">
    <original>S</original>
    <variation>P</variation>
    <location>
        <position position="299"/>
    </location>
</feature>
<feature type="sequence conflict" description="In Ref. 4; AAH12039." evidence="7" ref="4">
    <original>P</original>
    <variation>T</variation>
    <location>
        <position position="319"/>
    </location>
</feature>
<organism>
    <name type="scientific">Mus musculus</name>
    <name type="common">Mouse</name>
    <dbReference type="NCBI Taxonomy" id="10090"/>
    <lineage>
        <taxon>Eukaryota</taxon>
        <taxon>Metazoa</taxon>
        <taxon>Chordata</taxon>
        <taxon>Craniata</taxon>
        <taxon>Vertebrata</taxon>
        <taxon>Euteleostomi</taxon>
        <taxon>Mammalia</taxon>
        <taxon>Eutheria</taxon>
        <taxon>Euarchontoglires</taxon>
        <taxon>Glires</taxon>
        <taxon>Rodentia</taxon>
        <taxon>Myomorpha</taxon>
        <taxon>Muroidea</taxon>
        <taxon>Muridae</taxon>
        <taxon>Murinae</taxon>
        <taxon>Mus</taxon>
        <taxon>Mus</taxon>
    </lineage>
</organism>
<accession>Q3TWW8</accession>
<accession>Q3UJV5</accession>
<accession>Q921K3</accession>
<accession>Q9DBP1</accession>
<gene>
    <name type="primary">Srsf6</name>
    <name type="synonym">Sfrs6</name>
    <name type="synonym">Srp55</name>
</gene>
<name>SRSF6_MOUSE</name>
<proteinExistence type="evidence at protein level"/>